<accession>Q09FV4</accession>
<keyword id="KW-0066">ATP synthesis</keyword>
<keyword id="KW-0067">ATP-binding</keyword>
<keyword id="KW-0139">CF(1)</keyword>
<keyword id="KW-0150">Chloroplast</keyword>
<keyword id="KW-0375">Hydrogen ion transport</keyword>
<keyword id="KW-0406">Ion transport</keyword>
<keyword id="KW-0472">Membrane</keyword>
<keyword id="KW-0547">Nucleotide-binding</keyword>
<keyword id="KW-0934">Plastid</keyword>
<keyword id="KW-0793">Thylakoid</keyword>
<keyword id="KW-1278">Translocase</keyword>
<keyword id="KW-0813">Transport</keyword>
<organism>
    <name type="scientific">Nandina domestica</name>
    <name type="common">Heavenly bamboo</name>
    <dbReference type="NCBI Taxonomy" id="41776"/>
    <lineage>
        <taxon>Eukaryota</taxon>
        <taxon>Viridiplantae</taxon>
        <taxon>Streptophyta</taxon>
        <taxon>Embryophyta</taxon>
        <taxon>Tracheophyta</taxon>
        <taxon>Spermatophyta</taxon>
        <taxon>Magnoliopsida</taxon>
        <taxon>Ranunculales</taxon>
        <taxon>Berberidaceae</taxon>
        <taxon>Nandinoideae</taxon>
        <taxon>Nandineae</taxon>
        <taxon>Nandina</taxon>
    </lineage>
</organism>
<sequence length="498" mass="53699">MRINPTTSGPGVSALEEKNQGRIVQIIGPVLDVAFPPGKMPNIYNALVVKGQDTVGQQINVTCEVQQLLGNNRVRAVAMSATDGLMRGMEVIDTGAPLSVPVGGATLGRIFNVLGEPVDNLGPVDTRTTSPIHRSAPAFIQLDTKLSIFETGIKVVDLLAPYRRGGKIGLFGGAGVGKTVLIMELINNIAKAHGGVSVFGGVGERTREGNDLYMEMKESGVINEQNIAESKVALVYGQMNEPPGARMRVGLTALTMAEYFRDVNEQDVLLFIDNIFRFVQAGSEVSALLGRMPSAVGYQPTLSTEMGSLQERITSTKEGSITSIQAVYVPADDLTDPAPATTFAHLDATTVLSRGLAAKGIYPAVDPLDSTSTMLQPRIVGEEHYETAQRVKQTLQRYKELQDIIAILGLDELSEDDRLTVARARKIERFLSQPFFVAEVFTGSPGKYVGLTETIRGFQLILSGELDSLPEQAFYLVGNIDEATAKAMNLDVESKLKK</sequence>
<gene>
    <name evidence="1" type="primary">atpB</name>
</gene>
<evidence type="ECO:0000255" key="1">
    <source>
        <dbReference type="HAMAP-Rule" id="MF_01347"/>
    </source>
</evidence>
<proteinExistence type="inferred from homology"/>
<feature type="chain" id="PRO_0000339629" description="ATP synthase subunit beta, chloroplastic">
    <location>
        <begin position="1"/>
        <end position="498"/>
    </location>
</feature>
<feature type="binding site" evidence="1">
    <location>
        <begin position="172"/>
        <end position="179"/>
    </location>
    <ligand>
        <name>ATP</name>
        <dbReference type="ChEBI" id="CHEBI:30616"/>
    </ligand>
</feature>
<reference key="1">
    <citation type="journal article" date="2006" name="BMC Plant Biol.">
        <title>Rapid and accurate pyrosequencing of angiosperm plastid genomes.</title>
        <authorList>
            <person name="Moore M.J."/>
            <person name="Dhingra A."/>
            <person name="Soltis P.S."/>
            <person name="Shaw R."/>
            <person name="Farmerie W.G."/>
            <person name="Folta K.M."/>
            <person name="Soltis D.E."/>
        </authorList>
    </citation>
    <scope>NUCLEOTIDE SEQUENCE [LARGE SCALE GENOMIC DNA]</scope>
</reference>
<dbReference type="EC" id="7.1.2.2" evidence="1"/>
<dbReference type="EMBL" id="DQ923117">
    <property type="protein sequence ID" value="ABI49870.1"/>
    <property type="molecule type" value="Genomic_DNA"/>
</dbReference>
<dbReference type="RefSeq" id="YP_740657.1">
    <property type="nucleotide sequence ID" value="NC_008336.1"/>
</dbReference>
<dbReference type="SMR" id="Q09FV4"/>
<dbReference type="GeneID" id="4271603"/>
<dbReference type="GO" id="GO:0009535">
    <property type="term" value="C:chloroplast thylakoid membrane"/>
    <property type="evidence" value="ECO:0007669"/>
    <property type="project" value="UniProtKB-SubCell"/>
</dbReference>
<dbReference type="GO" id="GO:0005739">
    <property type="term" value="C:mitochondrion"/>
    <property type="evidence" value="ECO:0007669"/>
    <property type="project" value="GOC"/>
</dbReference>
<dbReference type="GO" id="GO:0045259">
    <property type="term" value="C:proton-transporting ATP synthase complex"/>
    <property type="evidence" value="ECO:0007669"/>
    <property type="project" value="UniProtKB-KW"/>
</dbReference>
<dbReference type="GO" id="GO:0005524">
    <property type="term" value="F:ATP binding"/>
    <property type="evidence" value="ECO:0007669"/>
    <property type="project" value="UniProtKB-UniRule"/>
</dbReference>
<dbReference type="GO" id="GO:0016887">
    <property type="term" value="F:ATP hydrolysis activity"/>
    <property type="evidence" value="ECO:0007669"/>
    <property type="project" value="InterPro"/>
</dbReference>
<dbReference type="GO" id="GO:0046933">
    <property type="term" value="F:proton-transporting ATP synthase activity, rotational mechanism"/>
    <property type="evidence" value="ECO:0007669"/>
    <property type="project" value="UniProtKB-UniRule"/>
</dbReference>
<dbReference type="GO" id="GO:0042776">
    <property type="term" value="P:proton motive force-driven mitochondrial ATP synthesis"/>
    <property type="evidence" value="ECO:0007669"/>
    <property type="project" value="TreeGrafter"/>
</dbReference>
<dbReference type="CDD" id="cd18110">
    <property type="entry name" value="ATP-synt_F1_beta_C"/>
    <property type="match status" value="1"/>
</dbReference>
<dbReference type="CDD" id="cd18115">
    <property type="entry name" value="ATP-synt_F1_beta_N"/>
    <property type="match status" value="1"/>
</dbReference>
<dbReference type="CDD" id="cd01133">
    <property type="entry name" value="F1-ATPase_beta_CD"/>
    <property type="match status" value="1"/>
</dbReference>
<dbReference type="FunFam" id="1.10.1140.10:FF:000001">
    <property type="entry name" value="ATP synthase subunit beta"/>
    <property type="match status" value="1"/>
</dbReference>
<dbReference type="FunFam" id="3.40.50.300:FF:000004">
    <property type="entry name" value="ATP synthase subunit beta"/>
    <property type="match status" value="1"/>
</dbReference>
<dbReference type="FunFam" id="2.40.10.170:FF:000002">
    <property type="entry name" value="ATP synthase subunit beta, chloroplastic"/>
    <property type="match status" value="1"/>
</dbReference>
<dbReference type="Gene3D" id="2.40.10.170">
    <property type="match status" value="1"/>
</dbReference>
<dbReference type="Gene3D" id="1.10.1140.10">
    <property type="entry name" value="Bovine Mitochondrial F1-atpase, Atp Synthase Beta Chain, Chain D, domain 3"/>
    <property type="match status" value="1"/>
</dbReference>
<dbReference type="Gene3D" id="3.40.50.300">
    <property type="entry name" value="P-loop containing nucleotide triphosphate hydrolases"/>
    <property type="match status" value="1"/>
</dbReference>
<dbReference type="HAMAP" id="MF_01347">
    <property type="entry name" value="ATP_synth_beta_bact"/>
    <property type="match status" value="1"/>
</dbReference>
<dbReference type="InterPro" id="IPR003593">
    <property type="entry name" value="AAA+_ATPase"/>
</dbReference>
<dbReference type="InterPro" id="IPR055190">
    <property type="entry name" value="ATP-synt_VA_C"/>
</dbReference>
<dbReference type="InterPro" id="IPR005722">
    <property type="entry name" value="ATP_synth_F1_bsu"/>
</dbReference>
<dbReference type="InterPro" id="IPR020003">
    <property type="entry name" value="ATPase_a/bsu_AS"/>
</dbReference>
<dbReference type="InterPro" id="IPR050053">
    <property type="entry name" value="ATPase_alpha/beta_chains"/>
</dbReference>
<dbReference type="InterPro" id="IPR004100">
    <property type="entry name" value="ATPase_F1/V1/A1_a/bsu_N"/>
</dbReference>
<dbReference type="InterPro" id="IPR036121">
    <property type="entry name" value="ATPase_F1/V1/A1_a/bsu_N_sf"/>
</dbReference>
<dbReference type="InterPro" id="IPR000194">
    <property type="entry name" value="ATPase_F1/V1/A1_a/bsu_nucl-bd"/>
</dbReference>
<dbReference type="InterPro" id="IPR024034">
    <property type="entry name" value="ATPase_F1/V1_b/a_C"/>
</dbReference>
<dbReference type="InterPro" id="IPR027417">
    <property type="entry name" value="P-loop_NTPase"/>
</dbReference>
<dbReference type="NCBIfam" id="TIGR01039">
    <property type="entry name" value="atpD"/>
    <property type="match status" value="1"/>
</dbReference>
<dbReference type="PANTHER" id="PTHR15184">
    <property type="entry name" value="ATP SYNTHASE"/>
    <property type="match status" value="1"/>
</dbReference>
<dbReference type="PANTHER" id="PTHR15184:SF71">
    <property type="entry name" value="ATP SYNTHASE SUBUNIT BETA, MITOCHONDRIAL"/>
    <property type="match status" value="1"/>
</dbReference>
<dbReference type="Pfam" id="PF00006">
    <property type="entry name" value="ATP-synt_ab"/>
    <property type="match status" value="1"/>
</dbReference>
<dbReference type="Pfam" id="PF02874">
    <property type="entry name" value="ATP-synt_ab_N"/>
    <property type="match status" value="1"/>
</dbReference>
<dbReference type="Pfam" id="PF22919">
    <property type="entry name" value="ATP-synt_VA_C"/>
    <property type="match status" value="1"/>
</dbReference>
<dbReference type="SMART" id="SM00382">
    <property type="entry name" value="AAA"/>
    <property type="match status" value="1"/>
</dbReference>
<dbReference type="SUPFAM" id="SSF47917">
    <property type="entry name" value="C-terminal domain of alpha and beta subunits of F1 ATP synthase"/>
    <property type="match status" value="1"/>
</dbReference>
<dbReference type="SUPFAM" id="SSF50615">
    <property type="entry name" value="N-terminal domain of alpha and beta subunits of F1 ATP synthase"/>
    <property type="match status" value="1"/>
</dbReference>
<dbReference type="SUPFAM" id="SSF52540">
    <property type="entry name" value="P-loop containing nucleoside triphosphate hydrolases"/>
    <property type="match status" value="1"/>
</dbReference>
<dbReference type="PROSITE" id="PS00152">
    <property type="entry name" value="ATPASE_ALPHA_BETA"/>
    <property type="match status" value="1"/>
</dbReference>
<geneLocation type="chloroplast"/>
<protein>
    <recommendedName>
        <fullName evidence="1">ATP synthase subunit beta, chloroplastic</fullName>
        <ecNumber evidence="1">7.1.2.2</ecNumber>
    </recommendedName>
    <alternativeName>
        <fullName evidence="1">ATP synthase F1 sector subunit beta</fullName>
    </alternativeName>
    <alternativeName>
        <fullName evidence="1">F-ATPase subunit beta</fullName>
    </alternativeName>
</protein>
<name>ATPB_NANDO</name>
<comment type="function">
    <text evidence="1">Produces ATP from ADP in the presence of a proton gradient across the membrane. The catalytic sites are hosted primarily by the beta subunits.</text>
</comment>
<comment type="catalytic activity">
    <reaction evidence="1">
        <text>ATP + H2O + 4 H(+)(in) = ADP + phosphate + 5 H(+)(out)</text>
        <dbReference type="Rhea" id="RHEA:57720"/>
        <dbReference type="ChEBI" id="CHEBI:15377"/>
        <dbReference type="ChEBI" id="CHEBI:15378"/>
        <dbReference type="ChEBI" id="CHEBI:30616"/>
        <dbReference type="ChEBI" id="CHEBI:43474"/>
        <dbReference type="ChEBI" id="CHEBI:456216"/>
        <dbReference type="EC" id="7.1.2.2"/>
    </reaction>
</comment>
<comment type="subunit">
    <text evidence="1">F-type ATPases have 2 components, CF(1) - the catalytic core - and CF(0) - the membrane proton channel. CF(1) has five subunits: alpha(3), beta(3), gamma(1), delta(1), epsilon(1). CF(0) has four main subunits: a(1), b(1), b'(1) and c(9-12).</text>
</comment>
<comment type="subcellular location">
    <subcellularLocation>
        <location evidence="1">Plastid</location>
        <location evidence="1">Chloroplast thylakoid membrane</location>
        <topology evidence="1">Peripheral membrane protein</topology>
    </subcellularLocation>
</comment>
<comment type="similarity">
    <text evidence="1">Belongs to the ATPase alpha/beta chains family.</text>
</comment>